<name>PHS_RHIJ3</name>
<comment type="catalytic activity">
    <reaction evidence="1">
        <text>(4aS,6R)-4a-hydroxy-L-erythro-5,6,7,8-tetrahydrobiopterin = (6R)-L-erythro-6,7-dihydrobiopterin + H2O</text>
        <dbReference type="Rhea" id="RHEA:11920"/>
        <dbReference type="ChEBI" id="CHEBI:15377"/>
        <dbReference type="ChEBI" id="CHEBI:15642"/>
        <dbReference type="ChEBI" id="CHEBI:43120"/>
        <dbReference type="EC" id="4.2.1.96"/>
    </reaction>
</comment>
<comment type="similarity">
    <text evidence="1">Belongs to the pterin-4-alpha-carbinolamine dehydratase family.</text>
</comment>
<organism>
    <name type="scientific">Rhizobium johnstonii (strain DSM 114642 / LMG 32736 / 3841)</name>
    <name type="common">Rhizobium leguminosarum bv. viciae</name>
    <dbReference type="NCBI Taxonomy" id="216596"/>
    <lineage>
        <taxon>Bacteria</taxon>
        <taxon>Pseudomonadati</taxon>
        <taxon>Pseudomonadota</taxon>
        <taxon>Alphaproteobacteria</taxon>
        <taxon>Hyphomicrobiales</taxon>
        <taxon>Rhizobiaceae</taxon>
        <taxon>Rhizobium/Agrobacterium group</taxon>
        <taxon>Rhizobium</taxon>
        <taxon>Rhizobium johnstonii</taxon>
    </lineage>
</organism>
<proteinExistence type="inferred from homology"/>
<sequence>MKMERLERTAVEAQLTELSGWALNDAGSSISKTFKFANFVEAFGFMTQAALAAEKLNHHPEWFNVYSRVDVTLNTHDAGGLTELDFKLAKAMEKAAARGVV</sequence>
<accession>Q1MAM8</accession>
<dbReference type="EC" id="4.2.1.96" evidence="1"/>
<dbReference type="EMBL" id="AM236080">
    <property type="protein sequence ID" value="CAK10010.1"/>
    <property type="molecule type" value="Genomic_DNA"/>
</dbReference>
<dbReference type="RefSeq" id="WP_003543642.1">
    <property type="nucleotide sequence ID" value="NC_008380.1"/>
</dbReference>
<dbReference type="SMR" id="Q1MAM8"/>
<dbReference type="EnsemblBacteria" id="CAK10010">
    <property type="protein sequence ID" value="CAK10010"/>
    <property type="gene ID" value="RL4526"/>
</dbReference>
<dbReference type="KEGG" id="rle:RL4526"/>
<dbReference type="eggNOG" id="COG2154">
    <property type="taxonomic scope" value="Bacteria"/>
</dbReference>
<dbReference type="HOGENOM" id="CLU_081974_3_2_5"/>
<dbReference type="Proteomes" id="UP000006575">
    <property type="component" value="Chromosome"/>
</dbReference>
<dbReference type="GO" id="GO:0008124">
    <property type="term" value="F:4-alpha-hydroxytetrahydrobiopterin dehydratase activity"/>
    <property type="evidence" value="ECO:0007669"/>
    <property type="project" value="UniProtKB-UniRule"/>
</dbReference>
<dbReference type="GO" id="GO:0006729">
    <property type="term" value="P:tetrahydrobiopterin biosynthetic process"/>
    <property type="evidence" value="ECO:0007669"/>
    <property type="project" value="InterPro"/>
</dbReference>
<dbReference type="CDD" id="cd00914">
    <property type="entry name" value="PCD_DCoH_subfamily_b"/>
    <property type="match status" value="1"/>
</dbReference>
<dbReference type="Gene3D" id="3.30.1360.20">
    <property type="entry name" value="Transcriptional coactivator/pterin dehydratase"/>
    <property type="match status" value="1"/>
</dbReference>
<dbReference type="HAMAP" id="MF_00434">
    <property type="entry name" value="Pterin_4_alpha"/>
    <property type="match status" value="1"/>
</dbReference>
<dbReference type="InterPro" id="IPR036428">
    <property type="entry name" value="PCD_sf"/>
</dbReference>
<dbReference type="InterPro" id="IPR001533">
    <property type="entry name" value="Pterin_deHydtase"/>
</dbReference>
<dbReference type="NCBIfam" id="NF002017">
    <property type="entry name" value="PRK00823.1-2"/>
    <property type="match status" value="1"/>
</dbReference>
<dbReference type="NCBIfam" id="NF002018">
    <property type="entry name" value="PRK00823.1-3"/>
    <property type="match status" value="1"/>
</dbReference>
<dbReference type="PANTHER" id="PTHR12599">
    <property type="entry name" value="PTERIN-4-ALPHA-CARBINOLAMINE DEHYDRATASE"/>
    <property type="match status" value="1"/>
</dbReference>
<dbReference type="PANTHER" id="PTHR12599:SF0">
    <property type="entry name" value="PTERIN-4-ALPHA-CARBINOLAMINE DEHYDRATASE"/>
    <property type="match status" value="1"/>
</dbReference>
<dbReference type="Pfam" id="PF01329">
    <property type="entry name" value="Pterin_4a"/>
    <property type="match status" value="1"/>
</dbReference>
<dbReference type="SUPFAM" id="SSF55248">
    <property type="entry name" value="PCD-like"/>
    <property type="match status" value="1"/>
</dbReference>
<evidence type="ECO:0000255" key="1">
    <source>
        <dbReference type="HAMAP-Rule" id="MF_00434"/>
    </source>
</evidence>
<keyword id="KW-0456">Lyase</keyword>
<feature type="chain" id="PRO_1000050442" description="Putative pterin-4-alpha-carbinolamine dehydratase">
    <location>
        <begin position="1"/>
        <end position="101"/>
    </location>
</feature>
<gene>
    <name type="ordered locus">RL4526</name>
</gene>
<protein>
    <recommendedName>
        <fullName evidence="1">Putative pterin-4-alpha-carbinolamine dehydratase</fullName>
        <shortName evidence="1">PHS</shortName>
        <ecNumber evidence="1">4.2.1.96</ecNumber>
    </recommendedName>
    <alternativeName>
        <fullName evidence="1">4-alpha-hydroxy-tetrahydropterin dehydratase</fullName>
    </alternativeName>
    <alternativeName>
        <fullName evidence="1">Pterin carbinolamine dehydratase</fullName>
        <shortName evidence="1">PCD</shortName>
    </alternativeName>
</protein>
<reference key="1">
    <citation type="journal article" date="2006" name="Genome Biol.">
        <title>The genome of Rhizobium leguminosarum has recognizable core and accessory components.</title>
        <authorList>
            <person name="Young J.P.W."/>
            <person name="Crossman L.C."/>
            <person name="Johnston A.W.B."/>
            <person name="Thomson N.R."/>
            <person name="Ghazoui Z.F."/>
            <person name="Hull K.H."/>
            <person name="Wexler M."/>
            <person name="Curson A.R.J."/>
            <person name="Todd J.D."/>
            <person name="Poole P.S."/>
            <person name="Mauchline T.H."/>
            <person name="East A.K."/>
            <person name="Quail M.A."/>
            <person name="Churcher C."/>
            <person name="Arrowsmith C."/>
            <person name="Cherevach I."/>
            <person name="Chillingworth T."/>
            <person name="Clarke K."/>
            <person name="Cronin A."/>
            <person name="Davis P."/>
            <person name="Fraser A."/>
            <person name="Hance Z."/>
            <person name="Hauser H."/>
            <person name="Jagels K."/>
            <person name="Moule S."/>
            <person name="Mungall K."/>
            <person name="Norbertczak H."/>
            <person name="Rabbinowitsch E."/>
            <person name="Sanders M."/>
            <person name="Simmonds M."/>
            <person name="Whitehead S."/>
            <person name="Parkhill J."/>
        </authorList>
    </citation>
    <scope>NUCLEOTIDE SEQUENCE [LARGE SCALE GENOMIC DNA]</scope>
    <source>
        <strain>DSM 114642 / LMG 32736 / 3841</strain>
    </source>
</reference>